<reference key="1">
    <citation type="journal article" date="2003" name="Appl. Microbiol. Biotechnol.">
        <title>The Corynebacterium glutamicum genome: features and impacts on biotechnological processes.</title>
        <authorList>
            <person name="Ikeda M."/>
            <person name="Nakagawa S."/>
        </authorList>
    </citation>
    <scope>NUCLEOTIDE SEQUENCE [LARGE SCALE GENOMIC DNA]</scope>
    <source>
        <strain>ATCC 13032 / DSM 20300 / JCM 1318 / BCRC 11384 / CCUG 27702 / LMG 3730 / NBRC 12168 / NCIMB 10025 / NRRL B-2784 / 534</strain>
    </source>
</reference>
<reference key="2">
    <citation type="journal article" date="2003" name="J. Biotechnol.">
        <title>The complete Corynebacterium glutamicum ATCC 13032 genome sequence and its impact on the production of L-aspartate-derived amino acids and vitamins.</title>
        <authorList>
            <person name="Kalinowski J."/>
            <person name="Bathe B."/>
            <person name="Bartels D."/>
            <person name="Bischoff N."/>
            <person name="Bott M."/>
            <person name="Burkovski A."/>
            <person name="Dusch N."/>
            <person name="Eggeling L."/>
            <person name="Eikmanns B.J."/>
            <person name="Gaigalat L."/>
            <person name="Goesmann A."/>
            <person name="Hartmann M."/>
            <person name="Huthmacher K."/>
            <person name="Kraemer R."/>
            <person name="Linke B."/>
            <person name="McHardy A.C."/>
            <person name="Meyer F."/>
            <person name="Moeckel B."/>
            <person name="Pfefferle W."/>
            <person name="Puehler A."/>
            <person name="Rey D.A."/>
            <person name="Rueckert C."/>
            <person name="Rupp O."/>
            <person name="Sahm H."/>
            <person name="Wendisch V.F."/>
            <person name="Wiegraebe I."/>
            <person name="Tauch A."/>
        </authorList>
    </citation>
    <scope>NUCLEOTIDE SEQUENCE [LARGE SCALE GENOMIC DNA]</scope>
    <source>
        <strain>ATCC 13032 / DSM 20300 / JCM 1318 / BCRC 11384 / CCUG 27702 / LMG 3730 / NBRC 12168 / NCIMB 10025 / NRRL B-2784 / 534</strain>
    </source>
</reference>
<name>RRF_CORGL</name>
<keyword id="KW-0963">Cytoplasm</keyword>
<keyword id="KW-0648">Protein biosynthesis</keyword>
<keyword id="KW-1185">Reference proteome</keyword>
<accession>Q8NP03</accession>
<protein>
    <recommendedName>
        <fullName evidence="1">Ribosome-recycling factor</fullName>
        <shortName evidence="1">RRF</shortName>
    </recommendedName>
    <alternativeName>
        <fullName evidence="1">Ribosome-releasing factor</fullName>
    </alternativeName>
</protein>
<proteinExistence type="inferred from homology"/>
<dbReference type="EMBL" id="BA000036">
    <property type="protein sequence ID" value="BAB99416.1"/>
    <property type="molecule type" value="Genomic_DNA"/>
</dbReference>
<dbReference type="EMBL" id="BX927154">
    <property type="protein sequence ID" value="CAF20363.1"/>
    <property type="molecule type" value="Genomic_DNA"/>
</dbReference>
<dbReference type="RefSeq" id="NP_601228.1">
    <property type="nucleotide sequence ID" value="NC_003450.3"/>
</dbReference>
<dbReference type="RefSeq" id="WP_011014829.1">
    <property type="nucleotide sequence ID" value="NC_006958.1"/>
</dbReference>
<dbReference type="SMR" id="Q8NP03"/>
<dbReference type="STRING" id="196627.cg2217"/>
<dbReference type="GeneID" id="1019979"/>
<dbReference type="KEGG" id="cgb:cg2217"/>
<dbReference type="KEGG" id="cgl:Cgl2023"/>
<dbReference type="PATRIC" id="fig|196627.13.peg.1961"/>
<dbReference type="eggNOG" id="COG0233">
    <property type="taxonomic scope" value="Bacteria"/>
</dbReference>
<dbReference type="HOGENOM" id="CLU_073981_2_0_11"/>
<dbReference type="OrthoDB" id="9804006at2"/>
<dbReference type="BioCyc" id="CORYNE:G18NG-11615-MONOMER"/>
<dbReference type="Proteomes" id="UP000000582">
    <property type="component" value="Chromosome"/>
</dbReference>
<dbReference type="Proteomes" id="UP000001009">
    <property type="component" value="Chromosome"/>
</dbReference>
<dbReference type="GO" id="GO:0005737">
    <property type="term" value="C:cytoplasm"/>
    <property type="evidence" value="ECO:0007669"/>
    <property type="project" value="UniProtKB-SubCell"/>
</dbReference>
<dbReference type="GO" id="GO:0043023">
    <property type="term" value="F:ribosomal large subunit binding"/>
    <property type="evidence" value="ECO:0007669"/>
    <property type="project" value="TreeGrafter"/>
</dbReference>
<dbReference type="GO" id="GO:0006415">
    <property type="term" value="P:translational termination"/>
    <property type="evidence" value="ECO:0007669"/>
    <property type="project" value="UniProtKB-UniRule"/>
</dbReference>
<dbReference type="CDD" id="cd00520">
    <property type="entry name" value="RRF"/>
    <property type="match status" value="1"/>
</dbReference>
<dbReference type="FunFam" id="1.10.132.20:FF:000001">
    <property type="entry name" value="Ribosome-recycling factor"/>
    <property type="match status" value="1"/>
</dbReference>
<dbReference type="FunFam" id="3.30.1360.40:FF:000001">
    <property type="entry name" value="Ribosome-recycling factor"/>
    <property type="match status" value="1"/>
</dbReference>
<dbReference type="Gene3D" id="3.30.1360.40">
    <property type="match status" value="1"/>
</dbReference>
<dbReference type="Gene3D" id="1.10.132.20">
    <property type="entry name" value="Ribosome-recycling factor"/>
    <property type="match status" value="1"/>
</dbReference>
<dbReference type="HAMAP" id="MF_00040">
    <property type="entry name" value="RRF"/>
    <property type="match status" value="1"/>
</dbReference>
<dbReference type="InterPro" id="IPR002661">
    <property type="entry name" value="Ribosome_recyc_fac"/>
</dbReference>
<dbReference type="InterPro" id="IPR023584">
    <property type="entry name" value="Ribosome_recyc_fac_dom"/>
</dbReference>
<dbReference type="InterPro" id="IPR036191">
    <property type="entry name" value="RRF_sf"/>
</dbReference>
<dbReference type="NCBIfam" id="TIGR00496">
    <property type="entry name" value="frr"/>
    <property type="match status" value="1"/>
</dbReference>
<dbReference type="PANTHER" id="PTHR20982:SF3">
    <property type="entry name" value="MITOCHONDRIAL RIBOSOME RECYCLING FACTOR PSEUDO 1"/>
    <property type="match status" value="1"/>
</dbReference>
<dbReference type="PANTHER" id="PTHR20982">
    <property type="entry name" value="RIBOSOME RECYCLING FACTOR"/>
    <property type="match status" value="1"/>
</dbReference>
<dbReference type="Pfam" id="PF01765">
    <property type="entry name" value="RRF"/>
    <property type="match status" value="1"/>
</dbReference>
<dbReference type="SUPFAM" id="SSF55194">
    <property type="entry name" value="Ribosome recycling factor, RRF"/>
    <property type="match status" value="1"/>
</dbReference>
<sequence length="185" mass="20749">MIDEILFEAEERMTATVEHTREDLTTIRTGRANPAMFNGVMAEYYGVPTPITQMSGITVPEPRMLLIKPYEMSSMQVIENAIRNSDLGVNPTNDGQVLRVTIPQLTEERRKDMVKLAKGKGEDGKIAIRNIRRKGMDQLKKLQKDGDAGEDEVQAAEKELDKVTAGFVAQVDEVVARKEKELMEV</sequence>
<organism>
    <name type="scientific">Corynebacterium glutamicum (strain ATCC 13032 / DSM 20300 / JCM 1318 / BCRC 11384 / CCUG 27702 / LMG 3730 / NBRC 12168 / NCIMB 10025 / NRRL B-2784 / 534)</name>
    <dbReference type="NCBI Taxonomy" id="196627"/>
    <lineage>
        <taxon>Bacteria</taxon>
        <taxon>Bacillati</taxon>
        <taxon>Actinomycetota</taxon>
        <taxon>Actinomycetes</taxon>
        <taxon>Mycobacteriales</taxon>
        <taxon>Corynebacteriaceae</taxon>
        <taxon>Corynebacterium</taxon>
    </lineage>
</organism>
<comment type="function">
    <text evidence="1">Responsible for the release of ribosomes from messenger RNA at the termination of protein biosynthesis. May increase the efficiency of translation by recycling ribosomes from one round of translation to another.</text>
</comment>
<comment type="subcellular location">
    <subcellularLocation>
        <location evidence="1">Cytoplasm</location>
    </subcellularLocation>
</comment>
<comment type="similarity">
    <text evidence="1">Belongs to the RRF family.</text>
</comment>
<feature type="chain" id="PRO_0000167449" description="Ribosome-recycling factor">
    <location>
        <begin position="1"/>
        <end position="185"/>
    </location>
</feature>
<gene>
    <name evidence="1" type="primary">frr</name>
    <name type="ordered locus">Cgl2023</name>
    <name type="ordered locus">cg2217</name>
</gene>
<evidence type="ECO:0000255" key="1">
    <source>
        <dbReference type="HAMAP-Rule" id="MF_00040"/>
    </source>
</evidence>